<protein>
    <recommendedName>
        <fullName evidence="1">2-C-methyl-D-erythritol 2,4-cyclodiphosphate synthase</fullName>
        <shortName evidence="1">MECDP-synthase</shortName>
        <shortName evidence="1">MECPP-synthase</shortName>
        <shortName evidence="1">MECPS</shortName>
        <ecNumber evidence="1">4.6.1.12</ecNumber>
    </recommendedName>
</protein>
<keyword id="KW-0414">Isoprene biosynthesis</keyword>
<keyword id="KW-0456">Lyase</keyword>
<keyword id="KW-0479">Metal-binding</keyword>
<proteinExistence type="inferred from homology"/>
<organism>
    <name type="scientific">Burkholderia mallei (strain NCTC 10247)</name>
    <dbReference type="NCBI Taxonomy" id="320389"/>
    <lineage>
        <taxon>Bacteria</taxon>
        <taxon>Pseudomonadati</taxon>
        <taxon>Pseudomonadota</taxon>
        <taxon>Betaproteobacteria</taxon>
        <taxon>Burkholderiales</taxon>
        <taxon>Burkholderiaceae</taxon>
        <taxon>Burkholderia</taxon>
        <taxon>pseudomallei group</taxon>
    </lineage>
</organism>
<sequence length="162" mass="17175">MDFRIGQGYDVHQLVPGRPLIIGGVTIPYERGLLGHSDADVLLHAITDALFGAAALGDIGRHFSDTDPRFKGADSRALLRECASRVAQAGFAIRNVDSTIIAQAPKLAPHIDAMRANIAADLDLPLDRVNVKAKTNEKLGYLGRGEGIEAQAAALVVREAAA</sequence>
<accession>A3MKM3</accession>
<gene>
    <name evidence="1" type="primary">ispF</name>
    <name type="ordered locus">BMA10247_1258</name>
</gene>
<feature type="chain" id="PRO_1000022812" description="2-C-methyl-D-erythritol 2,4-cyclodiphosphate synthase">
    <location>
        <begin position="1"/>
        <end position="162"/>
    </location>
</feature>
<feature type="binding site" evidence="1">
    <location>
        <begin position="10"/>
        <end position="12"/>
    </location>
    <ligand>
        <name>4-CDP-2-C-methyl-D-erythritol 2-phosphate</name>
        <dbReference type="ChEBI" id="CHEBI:57919"/>
    </ligand>
</feature>
<feature type="binding site" evidence="1">
    <location>
        <position position="10"/>
    </location>
    <ligand>
        <name>a divalent metal cation</name>
        <dbReference type="ChEBI" id="CHEBI:60240"/>
    </ligand>
</feature>
<feature type="binding site" evidence="1">
    <location>
        <position position="12"/>
    </location>
    <ligand>
        <name>a divalent metal cation</name>
        <dbReference type="ChEBI" id="CHEBI:60240"/>
    </ligand>
</feature>
<feature type="binding site" evidence="1">
    <location>
        <begin position="36"/>
        <end position="37"/>
    </location>
    <ligand>
        <name>4-CDP-2-C-methyl-D-erythritol 2-phosphate</name>
        <dbReference type="ChEBI" id="CHEBI:57919"/>
    </ligand>
</feature>
<feature type="binding site" evidence="1">
    <location>
        <position position="44"/>
    </location>
    <ligand>
        <name>a divalent metal cation</name>
        <dbReference type="ChEBI" id="CHEBI:60240"/>
    </ligand>
</feature>
<feature type="binding site" evidence="1">
    <location>
        <begin position="58"/>
        <end position="60"/>
    </location>
    <ligand>
        <name>4-CDP-2-C-methyl-D-erythritol 2-phosphate</name>
        <dbReference type="ChEBI" id="CHEBI:57919"/>
    </ligand>
</feature>
<feature type="binding site" evidence="1">
    <location>
        <begin position="63"/>
        <end position="67"/>
    </location>
    <ligand>
        <name>4-CDP-2-C-methyl-D-erythritol 2-phosphate</name>
        <dbReference type="ChEBI" id="CHEBI:57919"/>
    </ligand>
</feature>
<feature type="binding site" evidence="1">
    <location>
        <position position="144"/>
    </location>
    <ligand>
        <name>4-CDP-2-C-methyl-D-erythritol 2-phosphate</name>
        <dbReference type="ChEBI" id="CHEBI:57919"/>
    </ligand>
</feature>
<feature type="site" description="Transition state stabilizer" evidence="1">
    <location>
        <position position="36"/>
    </location>
</feature>
<feature type="site" description="Transition state stabilizer" evidence="1">
    <location>
        <position position="135"/>
    </location>
</feature>
<dbReference type="EC" id="4.6.1.12" evidence="1"/>
<dbReference type="EMBL" id="CP000548">
    <property type="protein sequence ID" value="ABO05155.1"/>
    <property type="molecule type" value="Genomic_DNA"/>
</dbReference>
<dbReference type="RefSeq" id="WP_004191369.1">
    <property type="nucleotide sequence ID" value="NZ_CP007802.1"/>
</dbReference>
<dbReference type="SMR" id="A3MKM3"/>
<dbReference type="GeneID" id="93060627"/>
<dbReference type="KEGG" id="bmaz:BM44_1859"/>
<dbReference type="KEGG" id="bmn:BMA10247_1258"/>
<dbReference type="PATRIC" id="fig|320389.8.peg.2086"/>
<dbReference type="UniPathway" id="UPA00056">
    <property type="reaction ID" value="UER00095"/>
</dbReference>
<dbReference type="GO" id="GO:0008685">
    <property type="term" value="F:2-C-methyl-D-erythritol 2,4-cyclodiphosphate synthase activity"/>
    <property type="evidence" value="ECO:0007669"/>
    <property type="project" value="UniProtKB-UniRule"/>
</dbReference>
<dbReference type="GO" id="GO:0046872">
    <property type="term" value="F:metal ion binding"/>
    <property type="evidence" value="ECO:0007669"/>
    <property type="project" value="UniProtKB-KW"/>
</dbReference>
<dbReference type="GO" id="GO:0019288">
    <property type="term" value="P:isopentenyl diphosphate biosynthetic process, methylerythritol 4-phosphate pathway"/>
    <property type="evidence" value="ECO:0007669"/>
    <property type="project" value="UniProtKB-UniRule"/>
</dbReference>
<dbReference type="GO" id="GO:0016114">
    <property type="term" value="P:terpenoid biosynthetic process"/>
    <property type="evidence" value="ECO:0007669"/>
    <property type="project" value="InterPro"/>
</dbReference>
<dbReference type="CDD" id="cd00554">
    <property type="entry name" value="MECDP_synthase"/>
    <property type="match status" value="1"/>
</dbReference>
<dbReference type="FunFam" id="3.30.1330.50:FF:000001">
    <property type="entry name" value="2-C-methyl-D-erythritol 2,4-cyclodiphosphate synthase"/>
    <property type="match status" value="1"/>
</dbReference>
<dbReference type="Gene3D" id="3.30.1330.50">
    <property type="entry name" value="2-C-methyl-D-erythritol 2,4-cyclodiphosphate synthase"/>
    <property type="match status" value="1"/>
</dbReference>
<dbReference type="HAMAP" id="MF_00107">
    <property type="entry name" value="IspF"/>
    <property type="match status" value="1"/>
</dbReference>
<dbReference type="InterPro" id="IPR003526">
    <property type="entry name" value="MECDP_synthase"/>
</dbReference>
<dbReference type="InterPro" id="IPR020555">
    <property type="entry name" value="MECDP_synthase_CS"/>
</dbReference>
<dbReference type="InterPro" id="IPR036571">
    <property type="entry name" value="MECDP_synthase_sf"/>
</dbReference>
<dbReference type="NCBIfam" id="TIGR00151">
    <property type="entry name" value="ispF"/>
    <property type="match status" value="1"/>
</dbReference>
<dbReference type="PANTHER" id="PTHR43181">
    <property type="entry name" value="2-C-METHYL-D-ERYTHRITOL 2,4-CYCLODIPHOSPHATE SYNTHASE, CHLOROPLASTIC"/>
    <property type="match status" value="1"/>
</dbReference>
<dbReference type="PANTHER" id="PTHR43181:SF1">
    <property type="entry name" value="2-C-METHYL-D-ERYTHRITOL 2,4-CYCLODIPHOSPHATE SYNTHASE, CHLOROPLASTIC"/>
    <property type="match status" value="1"/>
</dbReference>
<dbReference type="Pfam" id="PF02542">
    <property type="entry name" value="YgbB"/>
    <property type="match status" value="1"/>
</dbReference>
<dbReference type="SUPFAM" id="SSF69765">
    <property type="entry name" value="IpsF-like"/>
    <property type="match status" value="1"/>
</dbReference>
<dbReference type="PROSITE" id="PS01350">
    <property type="entry name" value="ISPF"/>
    <property type="match status" value="1"/>
</dbReference>
<name>ISPF_BURM7</name>
<reference key="1">
    <citation type="journal article" date="2010" name="Genome Biol. Evol.">
        <title>Continuing evolution of Burkholderia mallei through genome reduction and large-scale rearrangements.</title>
        <authorList>
            <person name="Losada L."/>
            <person name="Ronning C.M."/>
            <person name="DeShazer D."/>
            <person name="Woods D."/>
            <person name="Fedorova N."/>
            <person name="Kim H.S."/>
            <person name="Shabalina S.A."/>
            <person name="Pearson T.R."/>
            <person name="Brinkac L."/>
            <person name="Tan P."/>
            <person name="Nandi T."/>
            <person name="Crabtree J."/>
            <person name="Badger J."/>
            <person name="Beckstrom-Sternberg S."/>
            <person name="Saqib M."/>
            <person name="Schutzer S.E."/>
            <person name="Keim P."/>
            <person name="Nierman W.C."/>
        </authorList>
    </citation>
    <scope>NUCLEOTIDE SEQUENCE [LARGE SCALE GENOMIC DNA]</scope>
    <source>
        <strain>NCTC 10247</strain>
    </source>
</reference>
<comment type="function">
    <text evidence="1">Involved in the biosynthesis of isopentenyl diphosphate (IPP) and dimethylallyl diphosphate (DMAPP), two major building blocks of isoprenoid compounds. Catalyzes the conversion of 4-diphosphocytidyl-2-C-methyl-D-erythritol 2-phosphate (CDP-ME2P) to 2-C-methyl-D-erythritol 2,4-cyclodiphosphate (ME-CPP) with a corresponding release of cytidine 5-monophosphate (CMP).</text>
</comment>
<comment type="catalytic activity">
    <reaction evidence="1">
        <text>4-CDP-2-C-methyl-D-erythritol 2-phosphate = 2-C-methyl-D-erythritol 2,4-cyclic diphosphate + CMP</text>
        <dbReference type="Rhea" id="RHEA:23864"/>
        <dbReference type="ChEBI" id="CHEBI:57919"/>
        <dbReference type="ChEBI" id="CHEBI:58483"/>
        <dbReference type="ChEBI" id="CHEBI:60377"/>
        <dbReference type="EC" id="4.6.1.12"/>
    </reaction>
</comment>
<comment type="cofactor">
    <cofactor evidence="1">
        <name>a divalent metal cation</name>
        <dbReference type="ChEBI" id="CHEBI:60240"/>
    </cofactor>
    <text evidence="1">Binds 1 divalent metal cation per subunit.</text>
</comment>
<comment type="pathway">
    <text evidence="1">Isoprenoid biosynthesis; isopentenyl diphosphate biosynthesis via DXP pathway; isopentenyl diphosphate from 1-deoxy-D-xylulose 5-phosphate: step 4/6.</text>
</comment>
<comment type="subunit">
    <text evidence="1">Homotrimer.</text>
</comment>
<comment type="similarity">
    <text evidence="1">Belongs to the IspF family.</text>
</comment>
<evidence type="ECO:0000255" key="1">
    <source>
        <dbReference type="HAMAP-Rule" id="MF_00107"/>
    </source>
</evidence>